<keyword id="KW-0963">Cytoplasm</keyword>
<keyword id="KW-1185">Reference proteome</keyword>
<keyword id="KW-0964">Secreted</keyword>
<gene>
    <name evidence="5" type="primary">MTRNR2L13</name>
</gene>
<comment type="function">
    <text evidence="1">Plays a role as a neuroprotective and antiapoptotic factor.</text>
</comment>
<comment type="subcellular location">
    <subcellularLocation>
        <location evidence="1">Secreted</location>
    </subcellularLocation>
    <subcellularLocation>
        <location evidence="1">Cytoplasm</location>
    </subcellularLocation>
</comment>
<comment type="similarity">
    <text evidence="3">Belongs to the humanin family.</text>
</comment>
<comment type="caution">
    <text evidence="4">The humanin peptide has been shown to be biologically active but is the product of a mitochondrial gene, MT-RNR2. The mechanisms allowing the production and the secretion of humanin from the mitochondrial gene remaining unclear, the possibility exist that the physiologically active humanin peptide is encoded by one of the related genes present in the nuclear genome including the one described here (PubMed:19477263).</text>
</comment>
<organism>
    <name type="scientific">Homo sapiens</name>
    <name type="common">Human</name>
    <dbReference type="NCBI Taxonomy" id="9606"/>
    <lineage>
        <taxon>Eukaryota</taxon>
        <taxon>Metazoa</taxon>
        <taxon>Chordata</taxon>
        <taxon>Craniata</taxon>
        <taxon>Vertebrata</taxon>
        <taxon>Euteleostomi</taxon>
        <taxon>Mammalia</taxon>
        <taxon>Eutheria</taxon>
        <taxon>Euarchontoglires</taxon>
        <taxon>Primates</taxon>
        <taxon>Haplorrhini</taxon>
        <taxon>Catarrhini</taxon>
        <taxon>Hominidae</taxon>
        <taxon>Homo</taxon>
    </lineage>
</organism>
<accession>S4R3P1</accession>
<reference key="1">
    <citation type="journal article" date="2005" name="Nature">
        <title>Generation and annotation of the DNA sequences of human chromosomes 2 and 4.</title>
        <authorList>
            <person name="Hillier L.W."/>
            <person name="Graves T.A."/>
            <person name="Fulton R.S."/>
            <person name="Fulton L.A."/>
            <person name="Pepin K.H."/>
            <person name="Minx P."/>
            <person name="Wagner-McPherson C."/>
            <person name="Layman D."/>
            <person name="Wylie K."/>
            <person name="Sekhon M."/>
            <person name="Becker M.C."/>
            <person name="Fewell G.A."/>
            <person name="Delehaunty K.D."/>
            <person name="Miner T.L."/>
            <person name="Nash W.E."/>
            <person name="Kremitzki C."/>
            <person name="Oddy L."/>
            <person name="Du H."/>
            <person name="Sun H."/>
            <person name="Bradshaw-Cordum H."/>
            <person name="Ali J."/>
            <person name="Carter J."/>
            <person name="Cordes M."/>
            <person name="Harris A."/>
            <person name="Isak A."/>
            <person name="van Brunt A."/>
            <person name="Nguyen C."/>
            <person name="Du F."/>
            <person name="Courtney L."/>
            <person name="Kalicki J."/>
            <person name="Ozersky P."/>
            <person name="Abbott S."/>
            <person name="Armstrong J."/>
            <person name="Belter E.A."/>
            <person name="Caruso L."/>
            <person name="Cedroni M."/>
            <person name="Cotton M."/>
            <person name="Davidson T."/>
            <person name="Desai A."/>
            <person name="Elliott G."/>
            <person name="Erb T."/>
            <person name="Fronick C."/>
            <person name="Gaige T."/>
            <person name="Haakenson W."/>
            <person name="Haglund K."/>
            <person name="Holmes A."/>
            <person name="Harkins R."/>
            <person name="Kim K."/>
            <person name="Kruchowski S.S."/>
            <person name="Strong C.M."/>
            <person name="Grewal N."/>
            <person name="Goyea E."/>
            <person name="Hou S."/>
            <person name="Levy A."/>
            <person name="Martinka S."/>
            <person name="Mead K."/>
            <person name="McLellan M.D."/>
            <person name="Meyer R."/>
            <person name="Randall-Maher J."/>
            <person name="Tomlinson C."/>
            <person name="Dauphin-Kohlberg S."/>
            <person name="Kozlowicz-Reilly A."/>
            <person name="Shah N."/>
            <person name="Swearengen-Shahid S."/>
            <person name="Snider J."/>
            <person name="Strong J.T."/>
            <person name="Thompson J."/>
            <person name="Yoakum M."/>
            <person name="Leonard S."/>
            <person name="Pearman C."/>
            <person name="Trani L."/>
            <person name="Radionenko M."/>
            <person name="Waligorski J.E."/>
            <person name="Wang C."/>
            <person name="Rock S.M."/>
            <person name="Tin-Wollam A.-M."/>
            <person name="Maupin R."/>
            <person name="Latreille P."/>
            <person name="Wendl M.C."/>
            <person name="Yang S.-P."/>
            <person name="Pohl C."/>
            <person name="Wallis J.W."/>
            <person name="Spieth J."/>
            <person name="Bieri T.A."/>
            <person name="Berkowicz N."/>
            <person name="Nelson J.O."/>
            <person name="Osborne J."/>
            <person name="Ding L."/>
            <person name="Meyer R."/>
            <person name="Sabo A."/>
            <person name="Shotland Y."/>
            <person name="Sinha P."/>
            <person name="Wohldmann P.E."/>
            <person name="Cook L.L."/>
            <person name="Hickenbotham M.T."/>
            <person name="Eldred J."/>
            <person name="Williams D."/>
            <person name="Jones T.A."/>
            <person name="She X."/>
            <person name="Ciccarelli F.D."/>
            <person name="Izaurralde E."/>
            <person name="Taylor J."/>
            <person name="Schmutz J."/>
            <person name="Myers R.M."/>
            <person name="Cox D.R."/>
            <person name="Huang X."/>
            <person name="McPherson J.D."/>
            <person name="Mardis E.R."/>
            <person name="Clifton S.W."/>
            <person name="Warren W.C."/>
            <person name="Chinwalla A.T."/>
            <person name="Eddy S.R."/>
            <person name="Marra M.A."/>
            <person name="Ovcharenko I."/>
            <person name="Furey T.S."/>
            <person name="Miller W."/>
            <person name="Eichler E.E."/>
            <person name="Bork P."/>
            <person name="Suyama M."/>
            <person name="Torrents D."/>
            <person name="Waterston R.H."/>
            <person name="Wilson R.K."/>
        </authorList>
    </citation>
    <scope>NUCLEOTIDE SEQUENCE [LARGE SCALE GENOMIC DNA]</scope>
</reference>
<reference key="2">
    <citation type="journal article" date="2009" name="Genomics">
        <title>Evidence for potential functionality of nuclearly-encoded humanin isoforms.</title>
        <authorList>
            <person name="Bodzioch M."/>
            <person name="Lapicka-Bodzioch K."/>
            <person name="Zapala B."/>
            <person name="Kamysz W."/>
            <person name="Kiec-Wilk B."/>
            <person name="Dembinska-Kiec A."/>
        </authorList>
    </citation>
    <scope>IDENTIFICATION</scope>
</reference>
<proteinExistence type="inferred from homology"/>
<evidence type="ECO:0000250" key="1">
    <source>
        <dbReference type="UniProtKB" id="Q8IVG9"/>
    </source>
</evidence>
<evidence type="ECO:0000303" key="2">
    <source>
    </source>
</evidence>
<evidence type="ECO:0000305" key="3"/>
<evidence type="ECO:0000305" key="4">
    <source>
    </source>
</evidence>
<evidence type="ECO:0000312" key="5">
    <source>
        <dbReference type="HGNC" id="HGNC:37170"/>
    </source>
</evidence>
<sequence length="24" mass="2751">MDTQGFSCLLLLISEIDLSVKRRI</sequence>
<dbReference type="EMBL" id="AC024248">
    <property type="status" value="NOT_ANNOTATED_CDS"/>
    <property type="molecule type" value="Genomic_DNA"/>
</dbReference>
<dbReference type="STRING" id="9606.ENSP00000474570"/>
<dbReference type="BioMuta" id="MTRNR2L13"/>
<dbReference type="PaxDb" id="9606-ENSP00000474570"/>
<dbReference type="UCSC" id="uc021xqy.2">
    <property type="organism name" value="human"/>
</dbReference>
<dbReference type="AGR" id="HGNC:37170"/>
<dbReference type="GeneCards" id="MTRNR2L13"/>
<dbReference type="HGNC" id="HGNC:37170">
    <property type="gene designation" value="MTRNR2L13"/>
</dbReference>
<dbReference type="neXtProt" id="NX_S4R3P1"/>
<dbReference type="VEuPathDB" id="HostDB:ENSG00000270394"/>
<dbReference type="HOGENOM" id="CLU_221584_0_0_1"/>
<dbReference type="InParanoid" id="S4R3P1"/>
<dbReference type="PAN-GO" id="S4R3P1">
    <property type="GO annotations" value="2 GO annotations based on evolutionary models"/>
</dbReference>
<dbReference type="PhylomeDB" id="S4R3P1"/>
<dbReference type="Pharos" id="S4R3P1">
    <property type="development level" value="Tdark"/>
</dbReference>
<dbReference type="PRO" id="PR:S4R3P1"/>
<dbReference type="Proteomes" id="UP000005640">
    <property type="component" value="Chromosome 4"/>
</dbReference>
<dbReference type="Bgee" id="ENSG00000270394">
    <property type="expression patterns" value="Expressed in male germ line stem cell (sensu Vertebrata) in testis and 61 other cell types or tissues"/>
</dbReference>
<dbReference type="GO" id="GO:0005737">
    <property type="term" value="C:cytoplasm"/>
    <property type="evidence" value="ECO:0007669"/>
    <property type="project" value="UniProtKB-SubCell"/>
</dbReference>
<dbReference type="GO" id="GO:0005576">
    <property type="term" value="C:extracellular region"/>
    <property type="evidence" value="ECO:0007669"/>
    <property type="project" value="UniProtKB-SubCell"/>
</dbReference>
<dbReference type="GO" id="GO:0048019">
    <property type="term" value="F:receptor antagonist activity"/>
    <property type="evidence" value="ECO:0000318"/>
    <property type="project" value="GO_Central"/>
</dbReference>
<dbReference type="GO" id="GO:1900118">
    <property type="term" value="P:negative regulation of execution phase of apoptosis"/>
    <property type="evidence" value="ECO:0000318"/>
    <property type="project" value="GO_Central"/>
</dbReference>
<dbReference type="CDD" id="cd20245">
    <property type="entry name" value="humanin"/>
    <property type="match status" value="1"/>
</dbReference>
<dbReference type="InterPro" id="IPR028139">
    <property type="entry name" value="Humanin"/>
</dbReference>
<dbReference type="PANTHER" id="PTHR33895:SF17">
    <property type="entry name" value="HUMANIN-LIKE 13"/>
    <property type="match status" value="1"/>
</dbReference>
<dbReference type="PANTHER" id="PTHR33895">
    <property type="entry name" value="HUMANIN-LIKE 4"/>
    <property type="match status" value="1"/>
</dbReference>
<dbReference type="Pfam" id="PF15040">
    <property type="entry name" value="Humanin"/>
    <property type="match status" value="1"/>
</dbReference>
<name>HMN13_HUMAN</name>
<feature type="chain" id="PRO_0000430278" description="Humanin-like 13">
    <location>
        <begin position="1"/>
        <end position="24"/>
    </location>
</feature>
<protein>
    <recommendedName>
        <fullName evidence="3">Humanin-like 13</fullName>
        <shortName evidence="2">HN13</shortName>
    </recommendedName>
    <alternativeName>
        <fullName evidence="5">MT-RNR2-like protein 13</fullName>
    </alternativeName>
</protein>